<reference key="1">
    <citation type="journal article" date="1986" name="Nucleic Acids Res.">
        <title>Comparison of the late H1 histone genes of the sea urchins Lytechinus pictus and Strongelocentrotus purpuratus.</title>
        <authorList>
            <person name="Knowles J.A."/>
            <person name="Childs G.J."/>
        </authorList>
    </citation>
    <scope>NUCLEOTIDE SEQUENCE [GENOMIC DNA]</scope>
    <source>
        <tissue>Embryo</tissue>
    </source>
</reference>
<proteinExistence type="inferred from homology"/>
<keyword id="KW-0158">Chromosome</keyword>
<keyword id="KW-0238">DNA-binding</keyword>
<keyword id="KW-0539">Nucleus</keyword>
<feature type="chain" id="PRO_0000195939" description="Late histone H1">
    <location>
        <begin position="1"/>
        <end position="210"/>
    </location>
</feature>
<feature type="domain" description="H15" evidence="1">
    <location>
        <begin position="17"/>
        <end position="91"/>
    </location>
</feature>
<feature type="region of interest" description="Disordered" evidence="2">
    <location>
        <begin position="1"/>
        <end position="21"/>
    </location>
</feature>
<feature type="region of interest" description="Disordered" evidence="2">
    <location>
        <begin position="86"/>
        <end position="210"/>
    </location>
</feature>
<feature type="compositionally biased region" description="Basic residues" evidence="2">
    <location>
        <begin position="104"/>
        <end position="113"/>
    </location>
</feature>
<feature type="compositionally biased region" description="Basic and acidic residues" evidence="2">
    <location>
        <begin position="114"/>
        <end position="123"/>
    </location>
</feature>
<feature type="compositionally biased region" description="Basic residues" evidence="2">
    <location>
        <begin position="124"/>
        <end position="210"/>
    </location>
</feature>
<comment type="function">
    <text>Histones H1 are necessary for the condensation of nucleosome chains into higher-order structures.</text>
</comment>
<comment type="subcellular location">
    <subcellularLocation>
        <location>Nucleus</location>
    </subcellularLocation>
    <subcellularLocation>
        <location>Chromosome</location>
    </subcellularLocation>
</comment>
<comment type="similarity">
    <text evidence="1">Belongs to the histone H1/H5 family.</text>
</comment>
<name>H1_LYTPI</name>
<protein>
    <recommendedName>
        <fullName>Late histone H1</fullName>
    </recommendedName>
</protein>
<sequence length="210" mass="21746">MSAAKPKTAKKARAAPAHPPTSQMVVAAITALKERGGSSNQAIKKYIAANYKVDINKQATFIKRALKAGVANGTLVQVKGKGASGSFKLGKVKAGKTEAQKARAAAKKAKLAAKKKEQKEKKAAKTKARKEKLAAKKAAKKAAKKVKKPAAKAKKPAKKAAKKPAAKKAAKKPAAKKPAKKAAKKPAAKKAAKPAKKAAKKPAAKKAAKK</sequence>
<accession>P06144</accession>
<organism>
    <name type="scientific">Lytechinus pictus</name>
    <name type="common">Painted sea urchin</name>
    <dbReference type="NCBI Taxonomy" id="7653"/>
    <lineage>
        <taxon>Eukaryota</taxon>
        <taxon>Metazoa</taxon>
        <taxon>Echinodermata</taxon>
        <taxon>Eleutherozoa</taxon>
        <taxon>Echinozoa</taxon>
        <taxon>Echinoidea</taxon>
        <taxon>Euechinoidea</taxon>
        <taxon>Echinacea</taxon>
        <taxon>Temnopleuroida</taxon>
        <taxon>Toxopneustidae</taxon>
        <taxon>Lytechinus</taxon>
    </lineage>
</organism>
<dbReference type="EMBL" id="X04488">
    <property type="protein sequence ID" value="CAA28177.1"/>
    <property type="molecule type" value="Genomic_DNA"/>
</dbReference>
<dbReference type="PIR" id="A25550">
    <property type="entry name" value="A25550"/>
</dbReference>
<dbReference type="RefSeq" id="XP_063955472.1">
    <property type="nucleotide sequence ID" value="XM_064099402.1"/>
</dbReference>
<dbReference type="SMR" id="P06144"/>
<dbReference type="EnsemblMetazoa" id="XM_054898340.1">
    <property type="protein sequence ID" value="XP_054754315.1"/>
    <property type="gene ID" value="LOC129260346"/>
</dbReference>
<dbReference type="GeneID" id="129260346"/>
<dbReference type="OrthoDB" id="10070184at2759"/>
<dbReference type="GO" id="GO:0000786">
    <property type="term" value="C:nucleosome"/>
    <property type="evidence" value="ECO:0007669"/>
    <property type="project" value="InterPro"/>
</dbReference>
<dbReference type="GO" id="GO:0005634">
    <property type="term" value="C:nucleus"/>
    <property type="evidence" value="ECO:0007669"/>
    <property type="project" value="UniProtKB-SubCell"/>
</dbReference>
<dbReference type="GO" id="GO:0003690">
    <property type="term" value="F:double-stranded DNA binding"/>
    <property type="evidence" value="ECO:0007669"/>
    <property type="project" value="TreeGrafter"/>
</dbReference>
<dbReference type="GO" id="GO:0031492">
    <property type="term" value="F:nucleosomal DNA binding"/>
    <property type="evidence" value="ECO:0007669"/>
    <property type="project" value="TreeGrafter"/>
</dbReference>
<dbReference type="GO" id="GO:0030527">
    <property type="term" value="F:structural constituent of chromatin"/>
    <property type="evidence" value="ECO:0007669"/>
    <property type="project" value="InterPro"/>
</dbReference>
<dbReference type="GO" id="GO:0030261">
    <property type="term" value="P:chromosome condensation"/>
    <property type="evidence" value="ECO:0007669"/>
    <property type="project" value="TreeGrafter"/>
</dbReference>
<dbReference type="GO" id="GO:0045910">
    <property type="term" value="P:negative regulation of DNA recombination"/>
    <property type="evidence" value="ECO:0007669"/>
    <property type="project" value="TreeGrafter"/>
</dbReference>
<dbReference type="GO" id="GO:0006334">
    <property type="term" value="P:nucleosome assembly"/>
    <property type="evidence" value="ECO:0007669"/>
    <property type="project" value="InterPro"/>
</dbReference>
<dbReference type="CDD" id="cd00073">
    <property type="entry name" value="H15"/>
    <property type="match status" value="1"/>
</dbReference>
<dbReference type="FunFam" id="1.10.10.10:FF:000140">
    <property type="entry name" value="Histone H1.0"/>
    <property type="match status" value="1"/>
</dbReference>
<dbReference type="Gene3D" id="1.10.10.10">
    <property type="entry name" value="Winged helix-like DNA-binding domain superfamily/Winged helix DNA-binding domain"/>
    <property type="match status" value="1"/>
</dbReference>
<dbReference type="InterPro" id="IPR005819">
    <property type="entry name" value="H1/H5"/>
</dbReference>
<dbReference type="InterPro" id="IPR005818">
    <property type="entry name" value="Histone_H1/H5_H15"/>
</dbReference>
<dbReference type="InterPro" id="IPR036388">
    <property type="entry name" value="WH-like_DNA-bd_sf"/>
</dbReference>
<dbReference type="InterPro" id="IPR036390">
    <property type="entry name" value="WH_DNA-bd_sf"/>
</dbReference>
<dbReference type="PANTHER" id="PTHR11467:SF20">
    <property type="entry name" value="H15 DOMAIN-CONTAINING PROTEIN-RELATED"/>
    <property type="match status" value="1"/>
</dbReference>
<dbReference type="PANTHER" id="PTHR11467">
    <property type="entry name" value="HISTONE H1"/>
    <property type="match status" value="1"/>
</dbReference>
<dbReference type="Pfam" id="PF00538">
    <property type="entry name" value="Linker_histone"/>
    <property type="match status" value="1"/>
</dbReference>
<dbReference type="PRINTS" id="PR00624">
    <property type="entry name" value="HISTONEH5"/>
</dbReference>
<dbReference type="SMART" id="SM00526">
    <property type="entry name" value="H15"/>
    <property type="match status" value="1"/>
</dbReference>
<dbReference type="SUPFAM" id="SSF46785">
    <property type="entry name" value="Winged helix' DNA-binding domain"/>
    <property type="match status" value="1"/>
</dbReference>
<dbReference type="PROSITE" id="PS51504">
    <property type="entry name" value="H15"/>
    <property type="match status" value="1"/>
</dbReference>
<evidence type="ECO:0000255" key="1">
    <source>
        <dbReference type="PROSITE-ProRule" id="PRU00837"/>
    </source>
</evidence>
<evidence type="ECO:0000256" key="2">
    <source>
        <dbReference type="SAM" id="MobiDB-lite"/>
    </source>
</evidence>